<accession>Q03VW4</accession>
<sequence>MSEFNLKYFGTDGVRGVANKTLTPELAFRLGRTGGAILTRHANDENKKPVVIVGRDTRISGEMLQQAIIAGFLSVGIDVLRLGVITTPAVAFLVQNLEADAGVQITASHNPAADNGIKFFGNDGFKLSDQLEYEIEQLLDESEDTLPRPSADGLGVVNNYPEGVQKYLEFLQKTIPTDLNGMRIALDGANGATSGLLARLFADLGTDFVTLGTEPNGLNINDGVGSTNPAALAELVKENDVQAGLAFDGDGDRLIAVDENGEIVDGDKIMFITGKFLNEQGRLKHNAVVSTVMSNIGFYKALAENDMTSIKTAVGDRYVMEEMIKSDHNLGGEQSGHIIFRDWATTGDGLLTALQLLYVMKETGKKLSELAAPVHIYPQKLVNITVADKEEIQHDPDVIAKIAEVEAQMAGDGRVLVRPSGTEPLLRVMVEAPTQELVEKYTESIANVVREKSGL</sequence>
<keyword id="KW-0413">Isomerase</keyword>
<keyword id="KW-0460">Magnesium</keyword>
<keyword id="KW-0479">Metal-binding</keyword>
<keyword id="KW-0597">Phosphoprotein</keyword>
<keyword id="KW-1185">Reference proteome</keyword>
<reference key="1">
    <citation type="journal article" date="2006" name="Proc. Natl. Acad. Sci. U.S.A.">
        <title>Comparative genomics of the lactic acid bacteria.</title>
        <authorList>
            <person name="Makarova K.S."/>
            <person name="Slesarev A."/>
            <person name="Wolf Y.I."/>
            <person name="Sorokin A."/>
            <person name="Mirkin B."/>
            <person name="Koonin E.V."/>
            <person name="Pavlov A."/>
            <person name="Pavlova N."/>
            <person name="Karamychev V."/>
            <person name="Polouchine N."/>
            <person name="Shakhova V."/>
            <person name="Grigoriev I."/>
            <person name="Lou Y."/>
            <person name="Rohksar D."/>
            <person name="Lucas S."/>
            <person name="Huang K."/>
            <person name="Goodstein D.M."/>
            <person name="Hawkins T."/>
            <person name="Plengvidhya V."/>
            <person name="Welker D."/>
            <person name="Hughes J."/>
            <person name="Goh Y."/>
            <person name="Benson A."/>
            <person name="Baldwin K."/>
            <person name="Lee J.-H."/>
            <person name="Diaz-Muniz I."/>
            <person name="Dosti B."/>
            <person name="Smeianov V."/>
            <person name="Wechter W."/>
            <person name="Barabote R."/>
            <person name="Lorca G."/>
            <person name="Altermann E."/>
            <person name="Barrangou R."/>
            <person name="Ganesan B."/>
            <person name="Xie Y."/>
            <person name="Rawsthorne H."/>
            <person name="Tamir D."/>
            <person name="Parker C."/>
            <person name="Breidt F."/>
            <person name="Broadbent J.R."/>
            <person name="Hutkins R."/>
            <person name="O'Sullivan D."/>
            <person name="Steele J."/>
            <person name="Unlu G."/>
            <person name="Saier M.H. Jr."/>
            <person name="Klaenhammer T."/>
            <person name="Richardson P."/>
            <person name="Kozyavkin S."/>
            <person name="Weimer B.C."/>
            <person name="Mills D.A."/>
        </authorList>
    </citation>
    <scope>NUCLEOTIDE SEQUENCE [LARGE SCALE GENOMIC DNA]</scope>
    <source>
        <strain>ATCC 8293 / DSM 20343 / BCRC 11652 / CCM 1803 / JCM 6124 / NCDO 523 / NBRC 100496 / NCIMB 8023 / NCTC 12954 / NRRL B-1118 / 37Y</strain>
    </source>
</reference>
<name>GLMM_LEUMM</name>
<organism>
    <name type="scientific">Leuconostoc mesenteroides subsp. mesenteroides (strain ATCC 8293 / DSM 20343 / BCRC 11652 / CCM 1803 / JCM 6124 / NCDO 523 / NBRC 100496 / NCIMB 8023 / NCTC 12954 / NRRL B-1118 / 37Y)</name>
    <dbReference type="NCBI Taxonomy" id="203120"/>
    <lineage>
        <taxon>Bacteria</taxon>
        <taxon>Bacillati</taxon>
        <taxon>Bacillota</taxon>
        <taxon>Bacilli</taxon>
        <taxon>Lactobacillales</taxon>
        <taxon>Lactobacillaceae</taxon>
        <taxon>Leuconostoc</taxon>
    </lineage>
</organism>
<gene>
    <name evidence="1" type="primary">glmM</name>
    <name type="ordered locus">LEUM_1566</name>
</gene>
<dbReference type="EC" id="5.4.2.10" evidence="1"/>
<dbReference type="EMBL" id="CP000414">
    <property type="protein sequence ID" value="ABJ62658.1"/>
    <property type="molecule type" value="Genomic_DNA"/>
</dbReference>
<dbReference type="RefSeq" id="WP_011680227.1">
    <property type="nucleotide sequence ID" value="NC_008531.1"/>
</dbReference>
<dbReference type="SMR" id="Q03VW4"/>
<dbReference type="EnsemblBacteria" id="ABJ62658">
    <property type="protein sequence ID" value="ABJ62658"/>
    <property type="gene ID" value="LEUM_1566"/>
</dbReference>
<dbReference type="GeneID" id="29576627"/>
<dbReference type="KEGG" id="lme:LEUM_1566"/>
<dbReference type="eggNOG" id="COG1109">
    <property type="taxonomic scope" value="Bacteria"/>
</dbReference>
<dbReference type="HOGENOM" id="CLU_016950_7_0_9"/>
<dbReference type="Proteomes" id="UP000000362">
    <property type="component" value="Chromosome"/>
</dbReference>
<dbReference type="GO" id="GO:0005829">
    <property type="term" value="C:cytosol"/>
    <property type="evidence" value="ECO:0007669"/>
    <property type="project" value="TreeGrafter"/>
</dbReference>
<dbReference type="GO" id="GO:0000287">
    <property type="term" value="F:magnesium ion binding"/>
    <property type="evidence" value="ECO:0007669"/>
    <property type="project" value="UniProtKB-UniRule"/>
</dbReference>
<dbReference type="GO" id="GO:0008966">
    <property type="term" value="F:phosphoglucosamine mutase activity"/>
    <property type="evidence" value="ECO:0007669"/>
    <property type="project" value="UniProtKB-UniRule"/>
</dbReference>
<dbReference type="GO" id="GO:0004615">
    <property type="term" value="F:phosphomannomutase activity"/>
    <property type="evidence" value="ECO:0007669"/>
    <property type="project" value="TreeGrafter"/>
</dbReference>
<dbReference type="GO" id="GO:0005975">
    <property type="term" value="P:carbohydrate metabolic process"/>
    <property type="evidence" value="ECO:0007669"/>
    <property type="project" value="InterPro"/>
</dbReference>
<dbReference type="GO" id="GO:0009252">
    <property type="term" value="P:peptidoglycan biosynthetic process"/>
    <property type="evidence" value="ECO:0007669"/>
    <property type="project" value="TreeGrafter"/>
</dbReference>
<dbReference type="GO" id="GO:0006048">
    <property type="term" value="P:UDP-N-acetylglucosamine biosynthetic process"/>
    <property type="evidence" value="ECO:0007669"/>
    <property type="project" value="TreeGrafter"/>
</dbReference>
<dbReference type="CDD" id="cd05802">
    <property type="entry name" value="GlmM"/>
    <property type="match status" value="1"/>
</dbReference>
<dbReference type="FunFam" id="3.30.310.50:FF:000001">
    <property type="entry name" value="Phosphoglucosamine mutase"/>
    <property type="match status" value="1"/>
</dbReference>
<dbReference type="FunFam" id="3.40.120.10:FF:000001">
    <property type="entry name" value="Phosphoglucosamine mutase"/>
    <property type="match status" value="1"/>
</dbReference>
<dbReference type="FunFam" id="3.40.120.10:FF:000002">
    <property type="entry name" value="Phosphoglucosamine mutase"/>
    <property type="match status" value="1"/>
</dbReference>
<dbReference type="Gene3D" id="3.40.120.10">
    <property type="entry name" value="Alpha-D-Glucose-1,6-Bisphosphate, subunit A, domain 3"/>
    <property type="match status" value="3"/>
</dbReference>
<dbReference type="Gene3D" id="3.30.310.50">
    <property type="entry name" value="Alpha-D-phosphohexomutase, C-terminal domain"/>
    <property type="match status" value="1"/>
</dbReference>
<dbReference type="HAMAP" id="MF_01554_B">
    <property type="entry name" value="GlmM_B"/>
    <property type="match status" value="1"/>
</dbReference>
<dbReference type="InterPro" id="IPR005844">
    <property type="entry name" value="A-D-PHexomutase_a/b/a-I"/>
</dbReference>
<dbReference type="InterPro" id="IPR016055">
    <property type="entry name" value="A-D-PHexomutase_a/b/a-I/II/III"/>
</dbReference>
<dbReference type="InterPro" id="IPR005845">
    <property type="entry name" value="A-D-PHexomutase_a/b/a-II"/>
</dbReference>
<dbReference type="InterPro" id="IPR005846">
    <property type="entry name" value="A-D-PHexomutase_a/b/a-III"/>
</dbReference>
<dbReference type="InterPro" id="IPR005843">
    <property type="entry name" value="A-D-PHexomutase_C"/>
</dbReference>
<dbReference type="InterPro" id="IPR036900">
    <property type="entry name" value="A-D-PHexomutase_C_sf"/>
</dbReference>
<dbReference type="InterPro" id="IPR016066">
    <property type="entry name" value="A-D-PHexomutase_CS"/>
</dbReference>
<dbReference type="InterPro" id="IPR005841">
    <property type="entry name" value="Alpha-D-phosphohexomutase_SF"/>
</dbReference>
<dbReference type="InterPro" id="IPR006352">
    <property type="entry name" value="GlmM_bact"/>
</dbReference>
<dbReference type="InterPro" id="IPR050060">
    <property type="entry name" value="Phosphoglucosamine_mutase"/>
</dbReference>
<dbReference type="NCBIfam" id="TIGR01455">
    <property type="entry name" value="glmM"/>
    <property type="match status" value="1"/>
</dbReference>
<dbReference type="PANTHER" id="PTHR42946:SF1">
    <property type="entry name" value="PHOSPHOGLUCOMUTASE (ALPHA-D-GLUCOSE-1,6-BISPHOSPHATE-DEPENDENT)"/>
    <property type="match status" value="1"/>
</dbReference>
<dbReference type="PANTHER" id="PTHR42946">
    <property type="entry name" value="PHOSPHOHEXOSE MUTASE"/>
    <property type="match status" value="1"/>
</dbReference>
<dbReference type="Pfam" id="PF02878">
    <property type="entry name" value="PGM_PMM_I"/>
    <property type="match status" value="1"/>
</dbReference>
<dbReference type="Pfam" id="PF02879">
    <property type="entry name" value="PGM_PMM_II"/>
    <property type="match status" value="1"/>
</dbReference>
<dbReference type="Pfam" id="PF02880">
    <property type="entry name" value="PGM_PMM_III"/>
    <property type="match status" value="1"/>
</dbReference>
<dbReference type="Pfam" id="PF00408">
    <property type="entry name" value="PGM_PMM_IV"/>
    <property type="match status" value="1"/>
</dbReference>
<dbReference type="PRINTS" id="PR00509">
    <property type="entry name" value="PGMPMM"/>
</dbReference>
<dbReference type="SUPFAM" id="SSF55957">
    <property type="entry name" value="Phosphoglucomutase, C-terminal domain"/>
    <property type="match status" value="1"/>
</dbReference>
<dbReference type="SUPFAM" id="SSF53738">
    <property type="entry name" value="Phosphoglucomutase, first 3 domains"/>
    <property type="match status" value="3"/>
</dbReference>
<dbReference type="PROSITE" id="PS00710">
    <property type="entry name" value="PGM_PMM"/>
    <property type="match status" value="1"/>
</dbReference>
<evidence type="ECO:0000255" key="1">
    <source>
        <dbReference type="HAMAP-Rule" id="MF_01554"/>
    </source>
</evidence>
<comment type="function">
    <text evidence="1">Catalyzes the conversion of glucosamine-6-phosphate to glucosamine-1-phosphate.</text>
</comment>
<comment type="catalytic activity">
    <reaction evidence="1">
        <text>alpha-D-glucosamine 1-phosphate = D-glucosamine 6-phosphate</text>
        <dbReference type="Rhea" id="RHEA:23424"/>
        <dbReference type="ChEBI" id="CHEBI:58516"/>
        <dbReference type="ChEBI" id="CHEBI:58725"/>
        <dbReference type="EC" id="5.4.2.10"/>
    </reaction>
</comment>
<comment type="cofactor">
    <cofactor evidence="1">
        <name>Mg(2+)</name>
        <dbReference type="ChEBI" id="CHEBI:18420"/>
    </cofactor>
    <text evidence="1">Binds 1 Mg(2+) ion per subunit.</text>
</comment>
<comment type="PTM">
    <text evidence="1">Activated by phosphorylation.</text>
</comment>
<comment type="similarity">
    <text evidence="1">Belongs to the phosphohexose mutase family.</text>
</comment>
<proteinExistence type="inferred from homology"/>
<feature type="chain" id="PRO_0000305649" description="Phosphoglucosamine mutase">
    <location>
        <begin position="1"/>
        <end position="455"/>
    </location>
</feature>
<feature type="active site" description="Phosphoserine intermediate" evidence="1">
    <location>
        <position position="108"/>
    </location>
</feature>
<feature type="binding site" description="via phosphate group" evidence="1">
    <location>
        <position position="108"/>
    </location>
    <ligand>
        <name>Mg(2+)</name>
        <dbReference type="ChEBI" id="CHEBI:18420"/>
    </ligand>
</feature>
<feature type="binding site" evidence="1">
    <location>
        <position position="248"/>
    </location>
    <ligand>
        <name>Mg(2+)</name>
        <dbReference type="ChEBI" id="CHEBI:18420"/>
    </ligand>
</feature>
<feature type="binding site" evidence="1">
    <location>
        <position position="250"/>
    </location>
    <ligand>
        <name>Mg(2+)</name>
        <dbReference type="ChEBI" id="CHEBI:18420"/>
    </ligand>
</feature>
<feature type="binding site" evidence="1">
    <location>
        <position position="252"/>
    </location>
    <ligand>
        <name>Mg(2+)</name>
        <dbReference type="ChEBI" id="CHEBI:18420"/>
    </ligand>
</feature>
<feature type="modified residue" description="Phosphoserine" evidence="1">
    <location>
        <position position="108"/>
    </location>
</feature>
<protein>
    <recommendedName>
        <fullName evidence="1">Phosphoglucosamine mutase</fullName>
        <ecNumber evidence="1">5.4.2.10</ecNumber>
    </recommendedName>
</protein>